<name>ANMK_PROM3</name>
<accession>A2C698</accession>
<sequence>MRVLGLMSGTSADGVDAVLAEFSGSPSEPKWSLLNLVCTPYPEDLRQTVINAGQGITLNSREWLELSESITEVHAQAALACDPSAQAELVGSHGQTVWHRPPQKNHRGASWQILQAPLLAELLKRPVVHDFRAADLALGGQGAPLVPMADAALLGRVGGWRGVLNLGGIANLTLIPPRSGPDRRASVMGWDCGPANSLIDLAVEQISKGKLAFDHDGSIAASGHPHTTTIERWLKEAFFQLPPPKSTGREQFGLADLEQRLKELPKLSTANRVATLTAFSAAVVAQDLNNLRIRNLVRPLELIVAGGGSRNPVLMNELRQRCRGMRVLNSDELGLSAEAREGLAFALLAWWHCLQHPGNAPAITGAKRAAVLGVRADPA</sequence>
<dbReference type="EC" id="2.7.1.170" evidence="1"/>
<dbReference type="EMBL" id="CP000554">
    <property type="protein sequence ID" value="ABM77008.1"/>
    <property type="molecule type" value="Genomic_DNA"/>
</dbReference>
<dbReference type="RefSeq" id="WP_011824936.1">
    <property type="nucleotide sequence ID" value="NC_008820.1"/>
</dbReference>
<dbReference type="SMR" id="A2C698"/>
<dbReference type="STRING" id="59922.P9303_02531"/>
<dbReference type="KEGG" id="pmf:P9303_02531"/>
<dbReference type="HOGENOM" id="CLU_038782_1_0_3"/>
<dbReference type="BioCyc" id="PMAR59922:G1G80-243-MONOMER"/>
<dbReference type="UniPathway" id="UPA00343"/>
<dbReference type="UniPathway" id="UPA00544"/>
<dbReference type="Proteomes" id="UP000002274">
    <property type="component" value="Chromosome"/>
</dbReference>
<dbReference type="GO" id="GO:0005524">
    <property type="term" value="F:ATP binding"/>
    <property type="evidence" value="ECO:0007669"/>
    <property type="project" value="UniProtKB-UniRule"/>
</dbReference>
<dbReference type="GO" id="GO:0016301">
    <property type="term" value="F:kinase activity"/>
    <property type="evidence" value="ECO:0007669"/>
    <property type="project" value="UniProtKB-KW"/>
</dbReference>
<dbReference type="GO" id="GO:0016773">
    <property type="term" value="F:phosphotransferase activity, alcohol group as acceptor"/>
    <property type="evidence" value="ECO:0007669"/>
    <property type="project" value="UniProtKB-UniRule"/>
</dbReference>
<dbReference type="GO" id="GO:0097175">
    <property type="term" value="P:1,6-anhydro-N-acetyl-beta-muramic acid catabolic process"/>
    <property type="evidence" value="ECO:0007669"/>
    <property type="project" value="UniProtKB-UniRule"/>
</dbReference>
<dbReference type="GO" id="GO:0006040">
    <property type="term" value="P:amino sugar metabolic process"/>
    <property type="evidence" value="ECO:0007669"/>
    <property type="project" value="InterPro"/>
</dbReference>
<dbReference type="GO" id="GO:0009254">
    <property type="term" value="P:peptidoglycan turnover"/>
    <property type="evidence" value="ECO:0007669"/>
    <property type="project" value="UniProtKB-UniRule"/>
</dbReference>
<dbReference type="CDD" id="cd24050">
    <property type="entry name" value="ASKHA_NBD_ANMK"/>
    <property type="match status" value="1"/>
</dbReference>
<dbReference type="Gene3D" id="3.30.420.40">
    <property type="match status" value="2"/>
</dbReference>
<dbReference type="HAMAP" id="MF_01270">
    <property type="entry name" value="AnhMurNAc_kinase"/>
    <property type="match status" value="1"/>
</dbReference>
<dbReference type="InterPro" id="IPR005338">
    <property type="entry name" value="Anhydro_N_Ac-Mur_kinase"/>
</dbReference>
<dbReference type="InterPro" id="IPR043129">
    <property type="entry name" value="ATPase_NBD"/>
</dbReference>
<dbReference type="NCBIfam" id="NF007145">
    <property type="entry name" value="PRK09585.2-5"/>
    <property type="match status" value="1"/>
</dbReference>
<dbReference type="PANTHER" id="PTHR30605">
    <property type="entry name" value="ANHYDRO-N-ACETYLMURAMIC ACID KINASE"/>
    <property type="match status" value="1"/>
</dbReference>
<dbReference type="PANTHER" id="PTHR30605:SF0">
    <property type="entry name" value="ANHYDRO-N-ACETYLMURAMIC ACID KINASE"/>
    <property type="match status" value="1"/>
</dbReference>
<dbReference type="Pfam" id="PF03702">
    <property type="entry name" value="AnmK"/>
    <property type="match status" value="1"/>
</dbReference>
<dbReference type="SUPFAM" id="SSF53067">
    <property type="entry name" value="Actin-like ATPase domain"/>
    <property type="match status" value="1"/>
</dbReference>
<comment type="function">
    <text evidence="1">Catalyzes the specific phosphorylation of 1,6-anhydro-N-acetylmuramic acid (anhMurNAc) with the simultaneous cleavage of the 1,6-anhydro ring, generating MurNAc-6-P. Is required for the utilization of anhMurNAc either imported from the medium or derived from its own cell wall murein, and thus plays a role in cell wall recycling.</text>
</comment>
<comment type="catalytic activity">
    <reaction evidence="1">
        <text>1,6-anhydro-N-acetyl-beta-muramate + ATP + H2O = N-acetyl-D-muramate 6-phosphate + ADP + H(+)</text>
        <dbReference type="Rhea" id="RHEA:24952"/>
        <dbReference type="ChEBI" id="CHEBI:15377"/>
        <dbReference type="ChEBI" id="CHEBI:15378"/>
        <dbReference type="ChEBI" id="CHEBI:30616"/>
        <dbReference type="ChEBI" id="CHEBI:58690"/>
        <dbReference type="ChEBI" id="CHEBI:58722"/>
        <dbReference type="ChEBI" id="CHEBI:456216"/>
        <dbReference type="EC" id="2.7.1.170"/>
    </reaction>
</comment>
<comment type="pathway">
    <text evidence="1">Amino-sugar metabolism; 1,6-anhydro-N-acetylmuramate degradation.</text>
</comment>
<comment type="pathway">
    <text evidence="1">Cell wall biogenesis; peptidoglycan recycling.</text>
</comment>
<comment type="similarity">
    <text evidence="1">Belongs to the anhydro-N-acetylmuramic acid kinase family.</text>
</comment>
<gene>
    <name evidence="1" type="primary">anmK</name>
    <name type="ordered locus">P9303_02531</name>
</gene>
<organism>
    <name type="scientific">Prochlorococcus marinus (strain MIT 9303)</name>
    <dbReference type="NCBI Taxonomy" id="59922"/>
    <lineage>
        <taxon>Bacteria</taxon>
        <taxon>Bacillati</taxon>
        <taxon>Cyanobacteriota</taxon>
        <taxon>Cyanophyceae</taxon>
        <taxon>Synechococcales</taxon>
        <taxon>Prochlorococcaceae</taxon>
        <taxon>Prochlorococcus</taxon>
    </lineage>
</organism>
<evidence type="ECO:0000255" key="1">
    <source>
        <dbReference type="HAMAP-Rule" id="MF_01270"/>
    </source>
</evidence>
<reference key="1">
    <citation type="journal article" date="2007" name="PLoS Genet.">
        <title>Patterns and implications of gene gain and loss in the evolution of Prochlorococcus.</title>
        <authorList>
            <person name="Kettler G.C."/>
            <person name="Martiny A.C."/>
            <person name="Huang K."/>
            <person name="Zucker J."/>
            <person name="Coleman M.L."/>
            <person name="Rodrigue S."/>
            <person name="Chen F."/>
            <person name="Lapidus A."/>
            <person name="Ferriera S."/>
            <person name="Johnson J."/>
            <person name="Steglich C."/>
            <person name="Church G.M."/>
            <person name="Richardson P."/>
            <person name="Chisholm S.W."/>
        </authorList>
    </citation>
    <scope>NUCLEOTIDE SEQUENCE [LARGE SCALE GENOMIC DNA]</scope>
    <source>
        <strain>MIT 9303</strain>
    </source>
</reference>
<proteinExistence type="inferred from homology"/>
<keyword id="KW-0067">ATP-binding</keyword>
<keyword id="KW-0119">Carbohydrate metabolism</keyword>
<keyword id="KW-0418">Kinase</keyword>
<keyword id="KW-0547">Nucleotide-binding</keyword>
<keyword id="KW-0808">Transferase</keyword>
<feature type="chain" id="PRO_1000214171" description="Anhydro-N-acetylmuramic acid kinase">
    <location>
        <begin position="1"/>
        <end position="379"/>
    </location>
</feature>
<feature type="binding site" evidence="1">
    <location>
        <begin position="9"/>
        <end position="16"/>
    </location>
    <ligand>
        <name>ATP</name>
        <dbReference type="ChEBI" id="CHEBI:30616"/>
    </ligand>
</feature>
<protein>
    <recommendedName>
        <fullName evidence="1">Anhydro-N-acetylmuramic acid kinase</fullName>
        <ecNumber evidence="1">2.7.1.170</ecNumber>
    </recommendedName>
    <alternativeName>
        <fullName evidence="1">AnhMurNAc kinase</fullName>
    </alternativeName>
</protein>